<proteinExistence type="evidence at transcript level"/>
<feature type="chain" id="PRO_0000174817" description="Co-chaperonin GroES 1">
    <location>
        <begin position="1"/>
        <end position="98"/>
    </location>
</feature>
<keyword id="KW-0143">Chaperone</keyword>
<keyword id="KW-0963">Cytoplasm</keyword>
<keyword id="KW-1185">Reference proteome</keyword>
<keyword id="KW-0346">Stress response</keyword>
<name>CH101_RHIME</name>
<protein>
    <recommendedName>
        <fullName evidence="1">Co-chaperonin GroES 1</fullName>
    </recommendedName>
    <alternativeName>
        <fullName evidence="1">10 kDa chaperonin 1</fullName>
    </alternativeName>
    <alternativeName>
        <fullName evidence="1">Chaperonin-10 1</fullName>
        <shortName evidence="1">Cpn10 1</shortName>
    </alternativeName>
</protein>
<sequence length="98" mass="10587">MASTNFRPLHDRVVVRRVESEEKTKGGIIIPDTAKEKPQEGEIVAVGSGARDESGKVVPLDVKAGDRILFGKWSGTEVKINGEDLLIMKEADIMGVIG</sequence>
<comment type="function">
    <text evidence="1">Together with the chaperonin GroEL, plays an essential role in assisting protein folding. The GroEL-GroES system forms a nano-cage that allows encapsulation of the non-native substrate proteins and provides a physical environment optimized to promote and accelerate protein folding. GroES binds to the apical surface of the GroEL ring, thereby capping the opening of the GroEL channel.</text>
</comment>
<comment type="subunit">
    <text evidence="1">Heptamer of 7 subunits arranged in a ring. Interacts with the chaperonin GroEL.</text>
</comment>
<comment type="subcellular location">
    <subcellularLocation>
        <location evidence="1">Cytoplasm</location>
    </subcellularLocation>
</comment>
<comment type="induction">
    <text>By heat shock.</text>
</comment>
<comment type="similarity">
    <text evidence="1 2">Belongs to the GroES chaperonin family.</text>
</comment>
<reference key="1">
    <citation type="journal article" date="1993" name="Gene">
        <title>Cloning and characterization of multiple groEL chaperonin-encoding genes in Rhizobium meliloti.</title>
        <authorList>
            <person name="Rusanganwa E."/>
            <person name="Gupta R.S."/>
        </authorList>
    </citation>
    <scope>NUCLEOTIDE SEQUENCE [GENOMIC DNA]</scope>
    <source>
        <strain>1021</strain>
    </source>
</reference>
<reference key="2">
    <citation type="submission" date="1995-01" db="EMBL/GenBank/DDBJ databases">
        <authorList>
            <person name="Ogawa J."/>
        </authorList>
    </citation>
    <scope>NUCLEOTIDE SEQUENCE [GENOMIC DNA]</scope>
    <source>
        <strain>1021</strain>
    </source>
</reference>
<reference key="3">
    <citation type="journal article" date="2001" name="Proc. Natl. Acad. Sci. U.S.A.">
        <title>Analysis of the chromosome sequence of the legume symbiont Sinorhizobium meliloti strain 1021.</title>
        <authorList>
            <person name="Capela D."/>
            <person name="Barloy-Hubler F."/>
            <person name="Gouzy J."/>
            <person name="Bothe G."/>
            <person name="Ampe F."/>
            <person name="Batut J."/>
            <person name="Boistard P."/>
            <person name="Becker A."/>
            <person name="Boutry M."/>
            <person name="Cadieu E."/>
            <person name="Dreano S."/>
            <person name="Gloux S."/>
            <person name="Godrie T."/>
            <person name="Goffeau A."/>
            <person name="Kahn D."/>
            <person name="Kiss E."/>
            <person name="Lelaure V."/>
            <person name="Masuy D."/>
            <person name="Pohl T."/>
            <person name="Portetelle D."/>
            <person name="Puehler A."/>
            <person name="Purnelle B."/>
            <person name="Ramsperger U."/>
            <person name="Renard C."/>
            <person name="Thebault P."/>
            <person name="Vandenbol M."/>
            <person name="Weidner S."/>
            <person name="Galibert F."/>
        </authorList>
    </citation>
    <scope>NUCLEOTIDE SEQUENCE [LARGE SCALE GENOMIC DNA]</scope>
    <source>
        <strain>1021</strain>
    </source>
</reference>
<reference key="4">
    <citation type="journal article" date="2001" name="Science">
        <title>The composite genome of the legume symbiont Sinorhizobium meliloti.</title>
        <authorList>
            <person name="Galibert F."/>
            <person name="Finan T.M."/>
            <person name="Long S.R."/>
            <person name="Puehler A."/>
            <person name="Abola P."/>
            <person name="Ampe F."/>
            <person name="Barloy-Hubler F."/>
            <person name="Barnett M.J."/>
            <person name="Becker A."/>
            <person name="Boistard P."/>
            <person name="Bothe G."/>
            <person name="Boutry M."/>
            <person name="Bowser L."/>
            <person name="Buhrmester J."/>
            <person name="Cadieu E."/>
            <person name="Capela D."/>
            <person name="Chain P."/>
            <person name="Cowie A."/>
            <person name="Davis R.W."/>
            <person name="Dreano S."/>
            <person name="Federspiel N.A."/>
            <person name="Fisher R.F."/>
            <person name="Gloux S."/>
            <person name="Godrie T."/>
            <person name="Goffeau A."/>
            <person name="Golding B."/>
            <person name="Gouzy J."/>
            <person name="Gurjal M."/>
            <person name="Hernandez-Lucas I."/>
            <person name="Hong A."/>
            <person name="Huizar L."/>
            <person name="Hyman R.W."/>
            <person name="Jones T."/>
            <person name="Kahn D."/>
            <person name="Kahn M.L."/>
            <person name="Kalman S."/>
            <person name="Keating D.H."/>
            <person name="Kiss E."/>
            <person name="Komp C."/>
            <person name="Lelaure V."/>
            <person name="Masuy D."/>
            <person name="Palm C."/>
            <person name="Peck M.C."/>
            <person name="Pohl T.M."/>
            <person name="Portetelle D."/>
            <person name="Purnelle B."/>
            <person name="Ramsperger U."/>
            <person name="Surzycki R."/>
            <person name="Thebault P."/>
            <person name="Vandenbol M."/>
            <person name="Vorhoelter F.J."/>
            <person name="Weidner S."/>
            <person name="Wells D.H."/>
            <person name="Wong K."/>
            <person name="Yeh K.-C."/>
            <person name="Batut J."/>
        </authorList>
    </citation>
    <scope>NUCLEOTIDE SEQUENCE [LARGE SCALE GENOMIC DNA]</scope>
    <source>
        <strain>1021</strain>
    </source>
</reference>
<dbReference type="EMBL" id="M94192">
    <property type="protein sequence ID" value="AAA26284.1"/>
    <property type="molecule type" value="Genomic_DNA"/>
</dbReference>
<dbReference type="EMBL" id="U19726">
    <property type="protein sequence ID" value="AAA61954.1"/>
    <property type="molecule type" value="Genomic_DNA"/>
</dbReference>
<dbReference type="EMBL" id="AL591688">
    <property type="protein sequence ID" value="CAC45365.1"/>
    <property type="molecule type" value="Genomic_DNA"/>
</dbReference>
<dbReference type="PIR" id="JN0510">
    <property type="entry name" value="JN0510"/>
</dbReference>
<dbReference type="RefSeq" id="NP_384899.1">
    <property type="nucleotide sequence ID" value="NC_003047.1"/>
</dbReference>
<dbReference type="SMR" id="P35473"/>
<dbReference type="EnsemblBacteria" id="CAC45365">
    <property type="protein sequence ID" value="CAC45365"/>
    <property type="gene ID" value="SMc00912"/>
</dbReference>
<dbReference type="KEGG" id="sme:SMc00912"/>
<dbReference type="PATRIC" id="fig|266834.11.peg.2179"/>
<dbReference type="eggNOG" id="COG0234">
    <property type="taxonomic scope" value="Bacteria"/>
</dbReference>
<dbReference type="HOGENOM" id="CLU_132825_2_0_5"/>
<dbReference type="OrthoDB" id="9806791at2"/>
<dbReference type="Proteomes" id="UP000001976">
    <property type="component" value="Chromosome"/>
</dbReference>
<dbReference type="GO" id="GO:0005737">
    <property type="term" value="C:cytoplasm"/>
    <property type="evidence" value="ECO:0007669"/>
    <property type="project" value="UniProtKB-SubCell"/>
</dbReference>
<dbReference type="GO" id="GO:0005524">
    <property type="term" value="F:ATP binding"/>
    <property type="evidence" value="ECO:0007669"/>
    <property type="project" value="InterPro"/>
</dbReference>
<dbReference type="GO" id="GO:0046872">
    <property type="term" value="F:metal ion binding"/>
    <property type="evidence" value="ECO:0007669"/>
    <property type="project" value="TreeGrafter"/>
</dbReference>
<dbReference type="GO" id="GO:0044183">
    <property type="term" value="F:protein folding chaperone"/>
    <property type="evidence" value="ECO:0007669"/>
    <property type="project" value="InterPro"/>
</dbReference>
<dbReference type="GO" id="GO:0051087">
    <property type="term" value="F:protein-folding chaperone binding"/>
    <property type="evidence" value="ECO:0007669"/>
    <property type="project" value="TreeGrafter"/>
</dbReference>
<dbReference type="GO" id="GO:0051082">
    <property type="term" value="F:unfolded protein binding"/>
    <property type="evidence" value="ECO:0007669"/>
    <property type="project" value="TreeGrafter"/>
</dbReference>
<dbReference type="GO" id="GO:0051085">
    <property type="term" value="P:chaperone cofactor-dependent protein refolding"/>
    <property type="evidence" value="ECO:0007669"/>
    <property type="project" value="TreeGrafter"/>
</dbReference>
<dbReference type="CDD" id="cd00320">
    <property type="entry name" value="cpn10"/>
    <property type="match status" value="1"/>
</dbReference>
<dbReference type="FunFam" id="2.30.33.40:FF:000001">
    <property type="entry name" value="10 kDa chaperonin"/>
    <property type="match status" value="1"/>
</dbReference>
<dbReference type="Gene3D" id="2.30.33.40">
    <property type="entry name" value="GroES chaperonin"/>
    <property type="match status" value="1"/>
</dbReference>
<dbReference type="HAMAP" id="MF_00580">
    <property type="entry name" value="CH10"/>
    <property type="match status" value="1"/>
</dbReference>
<dbReference type="InterPro" id="IPR020818">
    <property type="entry name" value="Chaperonin_GroES"/>
</dbReference>
<dbReference type="InterPro" id="IPR037124">
    <property type="entry name" value="Chaperonin_GroES_sf"/>
</dbReference>
<dbReference type="InterPro" id="IPR018369">
    <property type="entry name" value="Chaprnonin_Cpn10_CS"/>
</dbReference>
<dbReference type="InterPro" id="IPR011032">
    <property type="entry name" value="GroES-like_sf"/>
</dbReference>
<dbReference type="NCBIfam" id="NF001527">
    <property type="entry name" value="PRK00364.1-2"/>
    <property type="match status" value="1"/>
</dbReference>
<dbReference type="NCBIfam" id="NF001529">
    <property type="entry name" value="PRK00364.1-5"/>
    <property type="match status" value="1"/>
</dbReference>
<dbReference type="NCBIfam" id="NF001531">
    <property type="entry name" value="PRK00364.2-2"/>
    <property type="match status" value="1"/>
</dbReference>
<dbReference type="NCBIfam" id="NF001533">
    <property type="entry name" value="PRK00364.2-4"/>
    <property type="match status" value="1"/>
</dbReference>
<dbReference type="NCBIfam" id="NF001534">
    <property type="entry name" value="PRK00364.2-5"/>
    <property type="match status" value="1"/>
</dbReference>
<dbReference type="PANTHER" id="PTHR10772">
    <property type="entry name" value="10 KDA HEAT SHOCK PROTEIN"/>
    <property type="match status" value="1"/>
</dbReference>
<dbReference type="PANTHER" id="PTHR10772:SF58">
    <property type="entry name" value="CO-CHAPERONIN GROES"/>
    <property type="match status" value="1"/>
</dbReference>
<dbReference type="Pfam" id="PF00166">
    <property type="entry name" value="Cpn10"/>
    <property type="match status" value="1"/>
</dbReference>
<dbReference type="PRINTS" id="PR00297">
    <property type="entry name" value="CHAPERONIN10"/>
</dbReference>
<dbReference type="SMART" id="SM00883">
    <property type="entry name" value="Cpn10"/>
    <property type="match status" value="1"/>
</dbReference>
<dbReference type="SUPFAM" id="SSF50129">
    <property type="entry name" value="GroES-like"/>
    <property type="match status" value="1"/>
</dbReference>
<dbReference type="PROSITE" id="PS00681">
    <property type="entry name" value="CHAPERONINS_CPN10"/>
    <property type="match status" value="1"/>
</dbReference>
<accession>P35473</accession>
<organism>
    <name type="scientific">Rhizobium meliloti (strain 1021)</name>
    <name type="common">Ensifer meliloti</name>
    <name type="synonym">Sinorhizobium meliloti</name>
    <dbReference type="NCBI Taxonomy" id="266834"/>
    <lineage>
        <taxon>Bacteria</taxon>
        <taxon>Pseudomonadati</taxon>
        <taxon>Pseudomonadota</taxon>
        <taxon>Alphaproteobacteria</taxon>
        <taxon>Hyphomicrobiales</taxon>
        <taxon>Rhizobiaceae</taxon>
        <taxon>Sinorhizobium/Ensifer group</taxon>
        <taxon>Sinorhizobium</taxon>
    </lineage>
</organism>
<evidence type="ECO:0000255" key="1">
    <source>
        <dbReference type="HAMAP-Rule" id="MF_00580"/>
    </source>
</evidence>
<evidence type="ECO:0000305" key="2"/>
<gene>
    <name evidence="1" type="primary">groES1</name>
    <name type="synonym">groES-A</name>
    <name evidence="1" type="synonym">groS1</name>
    <name type="ordered locus">R00793</name>
    <name type="ORF">SMc00912</name>
</gene>